<name>DEFI8_CAEEL</name>
<keyword id="KW-0479">Metal-binding</keyword>
<keyword id="KW-1185">Reference proteome</keyword>
<keyword id="KW-0677">Repeat</keyword>
<keyword id="KW-0862">Zinc</keyword>
<keyword id="KW-0863">Zinc-finger</keyword>
<dbReference type="EMBL" id="FO081189">
    <property type="protein sequence ID" value="CCD69775.1"/>
    <property type="molecule type" value="Genomic_DNA"/>
</dbReference>
<dbReference type="PIR" id="E88486">
    <property type="entry name" value="E88486"/>
</dbReference>
<dbReference type="RefSeq" id="NP_498454.2">
    <property type="nucleotide sequence ID" value="NM_066053.7"/>
</dbReference>
<dbReference type="SMR" id="O01738"/>
<dbReference type="BioGRID" id="41150">
    <property type="interactions" value="1"/>
</dbReference>
<dbReference type="FunCoup" id="O01738">
    <property type="interactions" value="887"/>
</dbReference>
<dbReference type="IntAct" id="O01738">
    <property type="interactions" value="1"/>
</dbReference>
<dbReference type="STRING" id="6239.F20H11.1.1"/>
<dbReference type="PaxDb" id="6239-F20H11.1"/>
<dbReference type="PeptideAtlas" id="O01738"/>
<dbReference type="EnsemblMetazoa" id="F20H11.1.1">
    <property type="protein sequence ID" value="F20H11.1.1"/>
    <property type="gene ID" value="WBGene00017646"/>
</dbReference>
<dbReference type="GeneID" id="175933"/>
<dbReference type="KEGG" id="cel:CELE_F20H11.1"/>
<dbReference type="UCSC" id="F20H11.1">
    <property type="organism name" value="c. elegans"/>
</dbReference>
<dbReference type="AGR" id="WB:WBGene00017646"/>
<dbReference type="CTD" id="175933"/>
<dbReference type="WormBase" id="F20H11.1">
    <property type="protein sequence ID" value="CE29769"/>
    <property type="gene ID" value="WBGene00017646"/>
</dbReference>
<dbReference type="eggNOG" id="KOG1829">
    <property type="taxonomic scope" value="Eukaryota"/>
</dbReference>
<dbReference type="HOGENOM" id="CLU_034500_0_0_1"/>
<dbReference type="InParanoid" id="O01738"/>
<dbReference type="OMA" id="GHNPCCE"/>
<dbReference type="OrthoDB" id="1918044at2759"/>
<dbReference type="PhylomeDB" id="O01738"/>
<dbReference type="PRO" id="PR:O01738"/>
<dbReference type="Proteomes" id="UP000001940">
    <property type="component" value="Chromosome III"/>
</dbReference>
<dbReference type="Bgee" id="WBGene00017646">
    <property type="expression patterns" value="Expressed in germ line (C elegans) and 4 other cell types or tissues"/>
</dbReference>
<dbReference type="GO" id="GO:0008270">
    <property type="term" value="F:zinc ion binding"/>
    <property type="evidence" value="ECO:0007669"/>
    <property type="project" value="UniProtKB-KW"/>
</dbReference>
<dbReference type="CDD" id="cd20819">
    <property type="entry name" value="C1_DEF8"/>
    <property type="match status" value="1"/>
</dbReference>
<dbReference type="Gene3D" id="3.30.60.20">
    <property type="match status" value="1"/>
</dbReference>
<dbReference type="InterPro" id="IPR046349">
    <property type="entry name" value="C1-like_sf"/>
</dbReference>
<dbReference type="InterPro" id="IPR051366">
    <property type="entry name" value="DEF8"/>
</dbReference>
<dbReference type="InterPro" id="IPR047983">
    <property type="entry name" value="DEF8_C1"/>
</dbReference>
<dbReference type="InterPro" id="IPR002219">
    <property type="entry name" value="PE/DAG-bd"/>
</dbReference>
<dbReference type="InterPro" id="IPR025258">
    <property type="entry name" value="RH_dom"/>
</dbReference>
<dbReference type="PANTHER" id="PTHR12326:SF3">
    <property type="entry name" value="DIFFERENTIALLY EXPRESSED IN FDCP 8 HOMOLOG"/>
    <property type="match status" value="1"/>
</dbReference>
<dbReference type="PANTHER" id="PTHR12326">
    <property type="entry name" value="PLECKSTRIN HOMOLOGY DOMAIN CONTAINING PROTEIN"/>
    <property type="match status" value="1"/>
</dbReference>
<dbReference type="Pfam" id="PF13901">
    <property type="entry name" value="RH_dom"/>
    <property type="match status" value="1"/>
</dbReference>
<dbReference type="SMART" id="SM00109">
    <property type="entry name" value="C1"/>
    <property type="match status" value="2"/>
</dbReference>
<dbReference type="SMART" id="SM01175">
    <property type="entry name" value="DUF4206"/>
    <property type="match status" value="1"/>
</dbReference>
<dbReference type="SUPFAM" id="SSF57889">
    <property type="entry name" value="Cysteine-rich domain"/>
    <property type="match status" value="1"/>
</dbReference>
<dbReference type="PROSITE" id="PS50081">
    <property type="entry name" value="ZF_DAG_PE_2"/>
    <property type="match status" value="2"/>
</dbReference>
<protein>
    <recommendedName>
        <fullName>Differentially expressed in FDCP 8 homolog</fullName>
    </recommendedName>
</protein>
<feature type="chain" id="PRO_0000321919" description="Differentially expressed in FDCP 8 homolog">
    <location>
        <begin position="1"/>
        <end position="486"/>
    </location>
</feature>
<feature type="zinc finger region" description="Phorbol-ester/DAG-type 1" evidence="1">
    <location>
        <begin position="160"/>
        <end position="212"/>
    </location>
</feature>
<feature type="zinc finger region" description="Phorbol-ester/DAG-type 2" evidence="1">
    <location>
        <begin position="393"/>
        <end position="459"/>
    </location>
</feature>
<feature type="region of interest" description="Disordered" evidence="2">
    <location>
        <begin position="1"/>
        <end position="26"/>
    </location>
</feature>
<reference key="1">
    <citation type="journal article" date="1998" name="Science">
        <title>Genome sequence of the nematode C. elegans: a platform for investigating biology.</title>
        <authorList>
            <consortium name="The C. elegans sequencing consortium"/>
        </authorList>
    </citation>
    <scope>NUCLEOTIDE SEQUENCE [LARGE SCALE GENOMIC DNA]</scope>
    <source>
        <strain>Bristol N2</strain>
    </source>
</reference>
<sequence>MSSWCSSEDAHNQSSTPSTRSRKSSWLISKIDENEIDKEVQEMMDDWRRSNEAENHVECIKAALEYCRDKLKELLIDEEDTEMDGKETKTKPINIVSNTEFPEDRDVLGNLVNCLDRQQKAARQQMYFDKIVQLGLERQALQDEAVVSTSSPLDECRAEGHEFVMQPVRGGHNPCCEVCMHTIWRLVQWWRRCRVCGMRAHDKCAEEVKRVCAGVLSTRAKFELNTNLCEERSLAEQEYQCAECTAPICFDGVAEQEARLCDYSGELFCPNCHWNDVWSIPARIVHNLDSTPRPVCRAVKQLLAIIDHRPLIDINESTLSLIKFHKELRRVNELRRNFLLMKCYFVSCRTARRLRILQYLNAHSHFVDNSVMYSPKELRELCDGTLLPDLEQIHTVFRKHIEEECETCAGNGFFCELCDDINVDQKNKILYPFTENTRSCATCLAVYHKKCFERKSLNCPRCERRRKRTEIPKTLSSSDEKEAVRN</sequence>
<gene>
    <name type="ORF">F20H11.1</name>
</gene>
<organism>
    <name type="scientific">Caenorhabditis elegans</name>
    <dbReference type="NCBI Taxonomy" id="6239"/>
    <lineage>
        <taxon>Eukaryota</taxon>
        <taxon>Metazoa</taxon>
        <taxon>Ecdysozoa</taxon>
        <taxon>Nematoda</taxon>
        <taxon>Chromadorea</taxon>
        <taxon>Rhabditida</taxon>
        <taxon>Rhabditina</taxon>
        <taxon>Rhabditomorpha</taxon>
        <taxon>Rhabditoidea</taxon>
        <taxon>Rhabditidae</taxon>
        <taxon>Peloderinae</taxon>
        <taxon>Caenorhabditis</taxon>
    </lineage>
</organism>
<accession>O01738</accession>
<evidence type="ECO:0000255" key="1">
    <source>
        <dbReference type="PROSITE-ProRule" id="PRU00226"/>
    </source>
</evidence>
<evidence type="ECO:0000256" key="2">
    <source>
        <dbReference type="SAM" id="MobiDB-lite"/>
    </source>
</evidence>
<evidence type="ECO:0000305" key="3"/>
<comment type="similarity">
    <text evidence="3">Belongs to the DEF8 family.</text>
</comment>
<proteinExistence type="inferred from homology"/>